<evidence type="ECO:0000255" key="1">
    <source>
        <dbReference type="HAMAP-Rule" id="MF_00445"/>
    </source>
</evidence>
<reference key="1">
    <citation type="journal article" date="2007" name="J. Bacteriol.">
        <title>Genome sequence analysis of the emerging human pathogenic acetic acid bacterium Granulibacter bethesdensis.</title>
        <authorList>
            <person name="Greenberg D.E."/>
            <person name="Porcella S.F."/>
            <person name="Zelazny A.M."/>
            <person name="Virtaneva K."/>
            <person name="Sturdevant D.E."/>
            <person name="Kupko J.J. III"/>
            <person name="Barbian K.D."/>
            <person name="Babar A."/>
            <person name="Dorward D.W."/>
            <person name="Holland S.M."/>
        </authorList>
    </citation>
    <scope>NUCLEOTIDE SEQUENCE [LARGE SCALE GENOMIC DNA]</scope>
    <source>
        <strain>ATCC BAA-1260 / CGDNIH1</strain>
    </source>
</reference>
<organism>
    <name type="scientific">Granulibacter bethesdensis (strain ATCC BAA-1260 / CGDNIH1)</name>
    <dbReference type="NCBI Taxonomy" id="391165"/>
    <lineage>
        <taxon>Bacteria</taxon>
        <taxon>Pseudomonadati</taxon>
        <taxon>Pseudomonadota</taxon>
        <taxon>Alphaproteobacteria</taxon>
        <taxon>Acetobacterales</taxon>
        <taxon>Acetobacteraceae</taxon>
        <taxon>Granulibacter</taxon>
    </lineage>
</organism>
<feature type="chain" id="PRO_0000391156" description="NADH-quinone oxidoreductase subunit N">
    <location>
        <begin position="1"/>
        <end position="478"/>
    </location>
</feature>
<feature type="transmembrane region" description="Helical" evidence="1">
    <location>
        <begin position="5"/>
        <end position="25"/>
    </location>
</feature>
<feature type="transmembrane region" description="Helical" evidence="1">
    <location>
        <begin position="37"/>
        <end position="57"/>
    </location>
</feature>
<feature type="transmembrane region" description="Helical" evidence="1">
    <location>
        <begin position="68"/>
        <end position="88"/>
    </location>
</feature>
<feature type="transmembrane region" description="Helical" evidence="1">
    <location>
        <begin position="99"/>
        <end position="119"/>
    </location>
</feature>
<feature type="transmembrane region" description="Helical" evidence="1">
    <location>
        <begin position="121"/>
        <end position="141"/>
    </location>
</feature>
<feature type="transmembrane region" description="Helical" evidence="1">
    <location>
        <begin position="156"/>
        <end position="176"/>
    </location>
</feature>
<feature type="transmembrane region" description="Helical" evidence="1">
    <location>
        <begin position="199"/>
        <end position="219"/>
    </location>
</feature>
<feature type="transmembrane region" description="Helical" evidence="1">
    <location>
        <begin position="231"/>
        <end position="251"/>
    </location>
</feature>
<feature type="transmembrane region" description="Helical" evidence="1">
    <location>
        <begin position="268"/>
        <end position="288"/>
    </location>
</feature>
<feature type="transmembrane region" description="Helical" evidence="1">
    <location>
        <begin position="293"/>
        <end position="313"/>
    </location>
</feature>
<feature type="transmembrane region" description="Helical" evidence="1">
    <location>
        <begin position="320"/>
        <end position="340"/>
    </location>
</feature>
<feature type="transmembrane region" description="Helical" evidence="1">
    <location>
        <begin position="365"/>
        <end position="385"/>
    </location>
</feature>
<feature type="transmembrane region" description="Helical" evidence="1">
    <location>
        <begin position="401"/>
        <end position="421"/>
    </location>
</feature>
<feature type="transmembrane region" description="Helical" evidence="1">
    <location>
        <begin position="446"/>
        <end position="466"/>
    </location>
</feature>
<keyword id="KW-0997">Cell inner membrane</keyword>
<keyword id="KW-1003">Cell membrane</keyword>
<keyword id="KW-0472">Membrane</keyword>
<keyword id="KW-0520">NAD</keyword>
<keyword id="KW-0874">Quinone</keyword>
<keyword id="KW-1185">Reference proteome</keyword>
<keyword id="KW-1278">Translocase</keyword>
<keyword id="KW-0812">Transmembrane</keyword>
<keyword id="KW-1133">Transmembrane helix</keyword>
<keyword id="KW-0813">Transport</keyword>
<keyword id="KW-0830">Ubiquinone</keyword>
<name>NUON_GRABC</name>
<proteinExistence type="inferred from homology"/>
<gene>
    <name evidence="1" type="primary">nuoN</name>
    <name type="ordered locus">GbCGDNIH1_1289</name>
</gene>
<comment type="function">
    <text evidence="1">NDH-1 shuttles electrons from NADH, via FMN and iron-sulfur (Fe-S) centers, to quinones in the respiratory chain. The immediate electron acceptor for the enzyme in this species is believed to be ubiquinone. Couples the redox reaction to proton translocation (for every two electrons transferred, four hydrogen ions are translocated across the cytoplasmic membrane), and thus conserves the redox energy in a proton gradient.</text>
</comment>
<comment type="catalytic activity">
    <reaction evidence="1">
        <text>a quinone + NADH + 5 H(+)(in) = a quinol + NAD(+) + 4 H(+)(out)</text>
        <dbReference type="Rhea" id="RHEA:57888"/>
        <dbReference type="ChEBI" id="CHEBI:15378"/>
        <dbReference type="ChEBI" id="CHEBI:24646"/>
        <dbReference type="ChEBI" id="CHEBI:57540"/>
        <dbReference type="ChEBI" id="CHEBI:57945"/>
        <dbReference type="ChEBI" id="CHEBI:132124"/>
    </reaction>
</comment>
<comment type="subunit">
    <text evidence="1">NDH-1 is composed of 14 different subunits. Subunits NuoA, H, J, K, L, M, N constitute the membrane sector of the complex.</text>
</comment>
<comment type="subcellular location">
    <subcellularLocation>
        <location evidence="1">Cell inner membrane</location>
        <topology evidence="1">Multi-pass membrane protein</topology>
    </subcellularLocation>
</comment>
<comment type="similarity">
    <text evidence="1">Belongs to the complex I subunit 2 family.</text>
</comment>
<accession>Q0BSL5</accession>
<protein>
    <recommendedName>
        <fullName evidence="1">NADH-quinone oxidoreductase subunit N</fullName>
        <ecNumber evidence="1">7.1.1.-</ecNumber>
    </recommendedName>
    <alternativeName>
        <fullName evidence="1">NADH dehydrogenase I subunit N</fullName>
    </alternativeName>
    <alternativeName>
        <fullName evidence="1">NDH-1 subunit N</fullName>
    </alternativeName>
</protein>
<sequence>MNWTLASPEIVLALCGLVILLVGVARNRREDTFLCAMLTLGAFLVTGLLTVSGALGLGFQGQFVADPFAVMVKLLILSGASIAVVLSLDYNRHHGMERFEFPVLTLFSTVGMMVMVSASNFMTLYMGLELMSLAIYVLAAFARDELRSAEAGLKYFVLGSLASGLLLYGISLIYGFAGTMDFSALREALAHPAGTSPGLTVGVVFVIAGLAFKISAAPFHMWTPDVYEGSPTPVTAFMGTAPKVAAIAMMLRTLVTPFHGVLVQWQHVVALISVVSMVWGALAAIGQTSIKRLMAYSSIGHMGYALVGLAAGSQAGIRGLLIYLVTYVFMNTGTFACILAMRRRGRQLEKVSDLAGAGRTDPALALLLAIFMFSMAGIPPMSGFFGKLYVFLAAVQAGEPLLWGLAVIGVLTSVIGAYYYLRVVKVMYFDDASEGPFEAWPTSVSVVAVGSAIFTALFFLFPAPILAAADLAAKALLR</sequence>
<dbReference type="EC" id="7.1.1.-" evidence="1"/>
<dbReference type="EMBL" id="CP000394">
    <property type="protein sequence ID" value="ABI62187.1"/>
    <property type="molecule type" value="Genomic_DNA"/>
</dbReference>
<dbReference type="RefSeq" id="WP_011631996.1">
    <property type="nucleotide sequence ID" value="NC_008343.2"/>
</dbReference>
<dbReference type="SMR" id="Q0BSL5"/>
<dbReference type="STRING" id="391165.GbCGDNIH1_1289"/>
<dbReference type="KEGG" id="gbe:GbCGDNIH1_1289"/>
<dbReference type="eggNOG" id="COG1007">
    <property type="taxonomic scope" value="Bacteria"/>
</dbReference>
<dbReference type="HOGENOM" id="CLU_007100_1_3_5"/>
<dbReference type="OrthoDB" id="9811718at2"/>
<dbReference type="Proteomes" id="UP000001963">
    <property type="component" value="Chromosome"/>
</dbReference>
<dbReference type="GO" id="GO:0005886">
    <property type="term" value="C:plasma membrane"/>
    <property type="evidence" value="ECO:0007669"/>
    <property type="project" value="UniProtKB-SubCell"/>
</dbReference>
<dbReference type="GO" id="GO:0008137">
    <property type="term" value="F:NADH dehydrogenase (ubiquinone) activity"/>
    <property type="evidence" value="ECO:0007669"/>
    <property type="project" value="InterPro"/>
</dbReference>
<dbReference type="GO" id="GO:0050136">
    <property type="term" value="F:NADH:ubiquinone reductase (non-electrogenic) activity"/>
    <property type="evidence" value="ECO:0007669"/>
    <property type="project" value="UniProtKB-UniRule"/>
</dbReference>
<dbReference type="GO" id="GO:0048038">
    <property type="term" value="F:quinone binding"/>
    <property type="evidence" value="ECO:0007669"/>
    <property type="project" value="UniProtKB-KW"/>
</dbReference>
<dbReference type="GO" id="GO:0042773">
    <property type="term" value="P:ATP synthesis coupled electron transport"/>
    <property type="evidence" value="ECO:0007669"/>
    <property type="project" value="InterPro"/>
</dbReference>
<dbReference type="HAMAP" id="MF_00445">
    <property type="entry name" value="NDH1_NuoN_1"/>
    <property type="match status" value="1"/>
</dbReference>
<dbReference type="InterPro" id="IPR010096">
    <property type="entry name" value="NADH-Q_OxRdtase_suN/2"/>
</dbReference>
<dbReference type="InterPro" id="IPR001750">
    <property type="entry name" value="ND/Mrp_TM"/>
</dbReference>
<dbReference type="NCBIfam" id="TIGR01770">
    <property type="entry name" value="NDH_I_N"/>
    <property type="match status" value="1"/>
</dbReference>
<dbReference type="NCBIfam" id="NF004440">
    <property type="entry name" value="PRK05777.1-3"/>
    <property type="match status" value="1"/>
</dbReference>
<dbReference type="PANTHER" id="PTHR22773">
    <property type="entry name" value="NADH DEHYDROGENASE"/>
    <property type="match status" value="1"/>
</dbReference>
<dbReference type="Pfam" id="PF00361">
    <property type="entry name" value="Proton_antipo_M"/>
    <property type="match status" value="1"/>
</dbReference>
<dbReference type="PRINTS" id="PR01434">
    <property type="entry name" value="NADHDHGNASE5"/>
</dbReference>